<keyword id="KW-0223">Dioxygenase</keyword>
<keyword id="KW-0408">Iron</keyword>
<keyword id="KW-1184">Jasmonic acid signaling pathway</keyword>
<keyword id="KW-0479">Metal-binding</keyword>
<keyword id="KW-0560">Oxidoreductase</keyword>
<keyword id="KW-0611">Plant defense</keyword>
<keyword id="KW-1185">Reference proteome</keyword>
<name>JOX4_ARATH</name>
<feature type="chain" id="PRO_0000438434" description="Jasmonate-induced oxygenase 4">
    <location>
        <begin position="1"/>
        <end position="353"/>
    </location>
</feature>
<feature type="domain" description="Fe2OG dioxygenase" evidence="2">
    <location>
        <begin position="202"/>
        <end position="302"/>
    </location>
</feature>
<feature type="binding site" evidence="1">
    <location>
        <position position="207"/>
    </location>
    <ligand>
        <name>jasmonate</name>
        <dbReference type="ChEBI" id="CHEBI:58431"/>
    </ligand>
</feature>
<feature type="binding site" evidence="1">
    <location>
        <position position="209"/>
    </location>
    <ligand>
        <name>2-oxoglutarate</name>
        <dbReference type="ChEBI" id="CHEBI:16810"/>
    </ligand>
</feature>
<feature type="binding site" evidence="1">
    <location>
        <position position="211"/>
    </location>
    <ligand>
        <name>2-oxoglutarate</name>
        <dbReference type="ChEBI" id="CHEBI:16810"/>
    </ligand>
</feature>
<feature type="binding site" evidence="2">
    <location>
        <position position="226"/>
    </location>
    <ligand>
        <name>Fe cation</name>
        <dbReference type="ChEBI" id="CHEBI:24875"/>
    </ligand>
</feature>
<feature type="binding site" evidence="2">
    <location>
        <position position="228"/>
    </location>
    <ligand>
        <name>Fe cation</name>
        <dbReference type="ChEBI" id="CHEBI:24875"/>
    </ligand>
</feature>
<feature type="binding site" evidence="2">
    <location>
        <position position="283"/>
    </location>
    <ligand>
        <name>Fe cation</name>
        <dbReference type="ChEBI" id="CHEBI:24875"/>
    </ligand>
</feature>
<feature type="binding site" evidence="2">
    <location>
        <position position="293"/>
    </location>
    <ligand>
        <name>2-oxoglutarate</name>
        <dbReference type="ChEBI" id="CHEBI:16810"/>
    </ligand>
</feature>
<feature type="binding site" evidence="1">
    <location>
        <position position="295"/>
    </location>
    <ligand>
        <name>2-oxoglutarate</name>
        <dbReference type="ChEBI" id="CHEBI:16810"/>
    </ligand>
</feature>
<feature type="binding site" evidence="1">
    <location>
        <position position="332"/>
    </location>
    <ligand>
        <name>jasmonate</name>
        <dbReference type="ChEBI" id="CHEBI:58431"/>
    </ligand>
</feature>
<feature type="binding site" evidence="1">
    <location>
        <position position="336"/>
    </location>
    <ligand>
        <name>jasmonate</name>
        <dbReference type="ChEBI" id="CHEBI:58431"/>
    </ligand>
</feature>
<feature type="sequence conflict" description="In Ref. 4; AAM63604." evidence="11" ref="4">
    <original>K</original>
    <variation>R</variation>
    <location>
        <position position="127"/>
    </location>
</feature>
<evidence type="ECO:0000250" key="1">
    <source>
        <dbReference type="UniProtKB" id="Q9FFF6"/>
    </source>
</evidence>
<evidence type="ECO:0000255" key="2">
    <source>
        <dbReference type="PROSITE-ProRule" id="PRU00805"/>
    </source>
</evidence>
<evidence type="ECO:0000269" key="3">
    <source>
    </source>
</evidence>
<evidence type="ECO:0000269" key="4">
    <source>
    </source>
</evidence>
<evidence type="ECO:0000269" key="5">
    <source>
    </source>
</evidence>
<evidence type="ECO:0000269" key="6">
    <source>
    </source>
</evidence>
<evidence type="ECO:0000269" key="7">
    <source>
    </source>
</evidence>
<evidence type="ECO:0000269" key="8">
    <source>
    </source>
</evidence>
<evidence type="ECO:0000303" key="9">
    <source>
    </source>
</evidence>
<evidence type="ECO:0000303" key="10">
    <source>
    </source>
</evidence>
<evidence type="ECO:0000305" key="11"/>
<evidence type="ECO:0000312" key="12">
    <source>
        <dbReference type="Araport" id="AT2G38240"/>
    </source>
</evidence>
<evidence type="ECO:0000312" key="13">
    <source>
        <dbReference type="EMBL" id="AAC27173.1"/>
    </source>
</evidence>
<dbReference type="EC" id="1.14.11.-" evidence="7 8"/>
<dbReference type="EMBL" id="AC003028">
    <property type="protein sequence ID" value="AAC27173.1"/>
    <property type="molecule type" value="Genomic_DNA"/>
</dbReference>
<dbReference type="EMBL" id="CP002685">
    <property type="protein sequence ID" value="AEC09512.1"/>
    <property type="molecule type" value="Genomic_DNA"/>
</dbReference>
<dbReference type="EMBL" id="AY062643">
    <property type="protein sequence ID" value="AAL32721.1"/>
    <property type="molecule type" value="mRNA"/>
</dbReference>
<dbReference type="EMBL" id="AY093302">
    <property type="protein sequence ID" value="AAM13301.1"/>
    <property type="molecule type" value="mRNA"/>
</dbReference>
<dbReference type="EMBL" id="AY086539">
    <property type="protein sequence ID" value="AAM63604.1"/>
    <property type="molecule type" value="mRNA"/>
</dbReference>
<dbReference type="PIR" id="T01256">
    <property type="entry name" value="T01256"/>
</dbReference>
<dbReference type="RefSeq" id="NP_181359.1">
    <property type="nucleotide sequence ID" value="NM_129381.4"/>
</dbReference>
<dbReference type="SMR" id="O80449"/>
<dbReference type="FunCoup" id="O80449">
    <property type="interactions" value="2"/>
</dbReference>
<dbReference type="STRING" id="3702.O80449"/>
<dbReference type="PaxDb" id="3702-AT2G38240.1"/>
<dbReference type="ProteomicsDB" id="222153"/>
<dbReference type="EnsemblPlants" id="AT2G38240.1">
    <property type="protein sequence ID" value="AT2G38240.1"/>
    <property type="gene ID" value="AT2G38240"/>
</dbReference>
<dbReference type="GeneID" id="818403"/>
<dbReference type="Gramene" id="AT2G38240.1">
    <property type="protein sequence ID" value="AT2G38240.1"/>
    <property type="gene ID" value="AT2G38240"/>
</dbReference>
<dbReference type="KEGG" id="ath:AT2G38240"/>
<dbReference type="Araport" id="AT2G38240"/>
<dbReference type="TAIR" id="AT2G38240">
    <property type="gene designation" value="JOX4"/>
</dbReference>
<dbReference type="eggNOG" id="KOG0143">
    <property type="taxonomic scope" value="Eukaryota"/>
</dbReference>
<dbReference type="HOGENOM" id="CLU_010119_16_0_1"/>
<dbReference type="InParanoid" id="O80449"/>
<dbReference type="OMA" id="TCRKIIA"/>
<dbReference type="PhylomeDB" id="O80449"/>
<dbReference type="PRO" id="PR:O80449"/>
<dbReference type="Proteomes" id="UP000006548">
    <property type="component" value="Chromosome 2"/>
</dbReference>
<dbReference type="ExpressionAtlas" id="O80449">
    <property type="expression patterns" value="baseline and differential"/>
</dbReference>
<dbReference type="GO" id="GO:0005829">
    <property type="term" value="C:cytosol"/>
    <property type="evidence" value="ECO:0000314"/>
    <property type="project" value="TAIR"/>
</dbReference>
<dbReference type="GO" id="GO:0051213">
    <property type="term" value="F:dioxygenase activity"/>
    <property type="evidence" value="ECO:0007669"/>
    <property type="project" value="UniProtKB-KW"/>
</dbReference>
<dbReference type="GO" id="GO:0005506">
    <property type="term" value="F:iron ion binding"/>
    <property type="evidence" value="ECO:0000250"/>
    <property type="project" value="UniProtKB"/>
</dbReference>
<dbReference type="GO" id="GO:0120091">
    <property type="term" value="F:jasmonic acid hydrolase"/>
    <property type="evidence" value="ECO:0000314"/>
    <property type="project" value="TAIR"/>
</dbReference>
<dbReference type="GO" id="GO:0006952">
    <property type="term" value="P:defense response"/>
    <property type="evidence" value="ECO:0007669"/>
    <property type="project" value="UniProtKB-KW"/>
</dbReference>
<dbReference type="GO" id="GO:1900366">
    <property type="term" value="P:negative regulation of defense response to insect"/>
    <property type="evidence" value="ECO:0000315"/>
    <property type="project" value="UniProtKB"/>
</dbReference>
<dbReference type="GO" id="GO:1900150">
    <property type="term" value="P:regulation of defense response to fungus"/>
    <property type="evidence" value="ECO:0000315"/>
    <property type="project" value="UniProtKB"/>
</dbReference>
<dbReference type="GO" id="GO:2000022">
    <property type="term" value="P:regulation of jasmonic acid mediated signaling pathway"/>
    <property type="evidence" value="ECO:0000316"/>
    <property type="project" value="TAIR"/>
</dbReference>
<dbReference type="FunFam" id="2.60.120.330:FF:000079">
    <property type="entry name" value="Protein SRG1"/>
    <property type="match status" value="1"/>
</dbReference>
<dbReference type="Gene3D" id="2.60.120.330">
    <property type="entry name" value="B-lactam Antibiotic, Isopenicillin N Synthase, Chain"/>
    <property type="match status" value="1"/>
</dbReference>
<dbReference type="InterPro" id="IPR026992">
    <property type="entry name" value="DIOX_N"/>
</dbReference>
<dbReference type="InterPro" id="IPR044861">
    <property type="entry name" value="IPNS-like_FE2OG_OXY"/>
</dbReference>
<dbReference type="InterPro" id="IPR027443">
    <property type="entry name" value="IPNS-like_sf"/>
</dbReference>
<dbReference type="InterPro" id="IPR005123">
    <property type="entry name" value="Oxoglu/Fe-dep_dioxygenase_dom"/>
</dbReference>
<dbReference type="InterPro" id="IPR050295">
    <property type="entry name" value="Plant_2OG-oxidoreductases"/>
</dbReference>
<dbReference type="PANTHER" id="PTHR47991">
    <property type="entry name" value="OXOGLUTARATE/IRON-DEPENDENT DIOXYGENASE"/>
    <property type="match status" value="1"/>
</dbReference>
<dbReference type="Pfam" id="PF03171">
    <property type="entry name" value="2OG-FeII_Oxy"/>
    <property type="match status" value="1"/>
</dbReference>
<dbReference type="Pfam" id="PF14226">
    <property type="entry name" value="DIOX_N"/>
    <property type="match status" value="1"/>
</dbReference>
<dbReference type="SUPFAM" id="SSF51197">
    <property type="entry name" value="Clavaminate synthase-like"/>
    <property type="match status" value="1"/>
</dbReference>
<dbReference type="PROSITE" id="PS51471">
    <property type="entry name" value="FE2OG_OXY"/>
    <property type="match status" value="1"/>
</dbReference>
<proteinExistence type="evidence at protein level"/>
<comment type="function">
    <text evidence="7 8">2-oxoglutarate-dependent dioxygenase involved in the oxidation of jasmonate (JA), a stress-induced phytohormone synthesized in response to attack by pathogens and herbivores, which triggers the activation of defense responses via the JA-mediated signaling pathway (PubMed:28559313, PubMed:28760569). Converts JA to 12-hydroxyjasmonate (12OH-JA), an inactive form of JA (PubMed:28559313, PubMed:28760569). Is specific to free JA, and cannot oxidize the bioactive form jasmonoyl-L-isoleucine (JA-Ile) or other JA-amino acid conjugates (PubMed:28760569). Prevents over-accumulation of JA and indirectly its bioactive form JA-Ile under stress response (PubMed:28559313, PubMed:28760569). Acts as a negative regulator of JA-mediated defense signaling, by contributing to 12OH-JA accumulation, which represses JA defense responses upon infection by the fungal pathogen Botrytis cinerea (PubMed:28559313, PubMed:28760569). Acts as a negative regulator of JA-mediated defense responses upon infestation by the herbivorous caterpillar Mamestra brassicae (PubMed:28559313).</text>
</comment>
<comment type="catalytic activity">
    <reaction evidence="7 8">
        <text>jasmonate + 2-oxoglutarate + O2 = (1R,2R)-12-hydroxyjasmonate + succinate + CO2</text>
        <dbReference type="Rhea" id="RHEA:67144"/>
        <dbReference type="ChEBI" id="CHEBI:15379"/>
        <dbReference type="ChEBI" id="CHEBI:16526"/>
        <dbReference type="ChEBI" id="CHEBI:16810"/>
        <dbReference type="ChEBI" id="CHEBI:30031"/>
        <dbReference type="ChEBI" id="CHEBI:58431"/>
        <dbReference type="ChEBI" id="CHEBI:132022"/>
    </reaction>
    <physiologicalReaction direction="left-to-right" evidence="7 8">
        <dbReference type="Rhea" id="RHEA:67145"/>
    </physiologicalReaction>
</comment>
<comment type="cofactor">
    <cofactor evidence="7 8">
        <name>L-ascorbate</name>
        <dbReference type="ChEBI" id="CHEBI:38290"/>
    </cofactor>
</comment>
<comment type="cofactor">
    <cofactor evidence="2 7 8">
        <name>Fe(2+)</name>
        <dbReference type="ChEBI" id="CHEBI:29033"/>
    </cofactor>
    <text evidence="2">Binds 1 Fe(2+) ion per subunit.</text>
</comment>
<comment type="induction">
    <text evidence="3 4 5 6 7 8">Induced by infection with the bacterial pathogen Pseudomonas syringae pv. tomato (PubMed:16553894). Induced by wounding (PubMed:17675405, PubMed:28760569). Induced by infection with the fungal pathogen Botrytis cinerea (PubMed:28559313, PubMed:28760569). Induced by methyl jasmonate (MeJA) (PubMed:28559313). Induced by infestation with the caterpillar Mamestra brassicae (PubMed:28559313). Induced by salt stress (PubMed:11351099). Down-regulated by UV-B (PubMed:17587374).</text>
</comment>
<comment type="disruption phenotype">
    <text evidence="7">The quadruple mutant jox1, jox2, jox3 and jox4 exhibit reduced root and shoot growth, delayed flowering, reduced seed production, constitutively elevated jasmonate and jasmonoyl-L-isoleucine levels, and enhanced resistance to the necrotrophic fungal pathogen Botrytis cinerea and the herbivorous caterpillar Mamestra brassicae.</text>
</comment>
<comment type="similarity">
    <text evidence="11">Belongs to the iron/ascorbate-dependent oxidoreductase family.</text>
</comment>
<reference key="1">
    <citation type="journal article" date="1999" name="Nature">
        <title>Sequence and analysis of chromosome 2 of the plant Arabidopsis thaliana.</title>
        <authorList>
            <person name="Lin X."/>
            <person name="Kaul S."/>
            <person name="Rounsley S.D."/>
            <person name="Shea T.P."/>
            <person name="Benito M.-I."/>
            <person name="Town C.D."/>
            <person name="Fujii C.Y."/>
            <person name="Mason T.M."/>
            <person name="Bowman C.L."/>
            <person name="Barnstead M.E."/>
            <person name="Feldblyum T.V."/>
            <person name="Buell C.R."/>
            <person name="Ketchum K.A."/>
            <person name="Lee J.J."/>
            <person name="Ronning C.M."/>
            <person name="Koo H.L."/>
            <person name="Moffat K.S."/>
            <person name="Cronin L.A."/>
            <person name="Shen M."/>
            <person name="Pai G."/>
            <person name="Van Aken S."/>
            <person name="Umayam L."/>
            <person name="Tallon L.J."/>
            <person name="Gill J.E."/>
            <person name="Adams M.D."/>
            <person name="Carrera A.J."/>
            <person name="Creasy T.H."/>
            <person name="Goodman H.M."/>
            <person name="Somerville C.R."/>
            <person name="Copenhaver G.P."/>
            <person name="Preuss D."/>
            <person name="Nierman W.C."/>
            <person name="White O."/>
            <person name="Eisen J.A."/>
            <person name="Salzberg S.L."/>
            <person name="Fraser C.M."/>
            <person name="Venter J.C."/>
        </authorList>
    </citation>
    <scope>NUCLEOTIDE SEQUENCE [LARGE SCALE GENOMIC DNA]</scope>
    <source>
        <strain>cv. Columbia</strain>
    </source>
</reference>
<reference key="2">
    <citation type="journal article" date="2017" name="Plant J.">
        <title>Araport11: a complete reannotation of the Arabidopsis thaliana reference genome.</title>
        <authorList>
            <person name="Cheng C.Y."/>
            <person name="Krishnakumar V."/>
            <person name="Chan A.P."/>
            <person name="Thibaud-Nissen F."/>
            <person name="Schobel S."/>
            <person name="Town C.D."/>
        </authorList>
    </citation>
    <scope>GENOME REANNOTATION</scope>
    <source>
        <strain>cv. Columbia</strain>
    </source>
</reference>
<reference key="3">
    <citation type="journal article" date="2003" name="Science">
        <title>Empirical analysis of transcriptional activity in the Arabidopsis genome.</title>
        <authorList>
            <person name="Yamada K."/>
            <person name="Lim J."/>
            <person name="Dale J.M."/>
            <person name="Chen H."/>
            <person name="Shinn P."/>
            <person name="Palm C.J."/>
            <person name="Southwick A.M."/>
            <person name="Wu H.C."/>
            <person name="Kim C.J."/>
            <person name="Nguyen M."/>
            <person name="Pham P.K."/>
            <person name="Cheuk R.F."/>
            <person name="Karlin-Newmann G."/>
            <person name="Liu S.X."/>
            <person name="Lam B."/>
            <person name="Sakano H."/>
            <person name="Wu T."/>
            <person name="Yu G."/>
            <person name="Miranda M."/>
            <person name="Quach H.L."/>
            <person name="Tripp M."/>
            <person name="Chang C.H."/>
            <person name="Lee J.M."/>
            <person name="Toriumi M.J."/>
            <person name="Chan M.M."/>
            <person name="Tang C.C."/>
            <person name="Onodera C.S."/>
            <person name="Deng J.M."/>
            <person name="Akiyama K."/>
            <person name="Ansari Y."/>
            <person name="Arakawa T."/>
            <person name="Banh J."/>
            <person name="Banno F."/>
            <person name="Bowser L."/>
            <person name="Brooks S.Y."/>
            <person name="Carninci P."/>
            <person name="Chao Q."/>
            <person name="Choy N."/>
            <person name="Enju A."/>
            <person name="Goldsmith A.D."/>
            <person name="Gurjal M."/>
            <person name="Hansen N.F."/>
            <person name="Hayashizaki Y."/>
            <person name="Johnson-Hopson C."/>
            <person name="Hsuan V.W."/>
            <person name="Iida K."/>
            <person name="Karnes M."/>
            <person name="Khan S."/>
            <person name="Koesema E."/>
            <person name="Ishida J."/>
            <person name="Jiang P.X."/>
            <person name="Jones T."/>
            <person name="Kawai J."/>
            <person name="Kamiya A."/>
            <person name="Meyers C."/>
            <person name="Nakajima M."/>
            <person name="Narusaka M."/>
            <person name="Seki M."/>
            <person name="Sakurai T."/>
            <person name="Satou M."/>
            <person name="Tamse R."/>
            <person name="Vaysberg M."/>
            <person name="Wallender E.K."/>
            <person name="Wong C."/>
            <person name="Yamamura Y."/>
            <person name="Yuan S."/>
            <person name="Shinozaki K."/>
            <person name="Davis R.W."/>
            <person name="Theologis A."/>
            <person name="Ecker J.R."/>
        </authorList>
    </citation>
    <scope>NUCLEOTIDE SEQUENCE [LARGE SCALE MRNA]</scope>
    <source>
        <strain>cv. Columbia</strain>
    </source>
</reference>
<reference key="4">
    <citation type="submission" date="2002-03" db="EMBL/GenBank/DDBJ databases">
        <title>Full-length cDNA from Arabidopsis thaliana.</title>
        <authorList>
            <person name="Brover V.V."/>
            <person name="Troukhan M.E."/>
            <person name="Alexandrov N.A."/>
            <person name="Lu Y.-P."/>
            <person name="Flavell R.B."/>
            <person name="Feldmann K.A."/>
        </authorList>
    </citation>
    <scope>NUCLEOTIDE SEQUENCE [LARGE SCALE MRNA]</scope>
</reference>
<reference key="5">
    <citation type="journal article" date="2001" name="Plant Physiol.">
        <title>Genes that are uniquely stress regulated in salt overly sensitive (sos) mutants.</title>
        <authorList>
            <person name="Gong Z."/>
            <person name="Koiwa H."/>
            <person name="Cushman M.A."/>
            <person name="Ray A."/>
            <person name="Bufford D."/>
            <person name="Kore-eda S."/>
            <person name="Matsumoto T.K."/>
            <person name="Zhu J."/>
            <person name="Cushman J.C."/>
            <person name="Bressan R.A."/>
            <person name="Hasegawa P.M."/>
        </authorList>
    </citation>
    <scope>INDUCTION BY SALT STRESS</scope>
</reference>
<reference key="6">
    <citation type="journal article" date="2006" name="Plant J.">
        <title>Genome-wide transcriptional analysis of the Arabidopsis thaliana interaction with the plant pathogen Pseudomonas syringae pv. tomato DC3000 and the human pathogen Escherichia coli O157:H7.</title>
        <authorList>
            <person name="Thilmony R."/>
            <person name="Underwood W."/>
            <person name="He S.Y."/>
        </authorList>
    </citation>
    <scope>INDUCTION BY BACTERIAL INFECTION</scope>
</reference>
<reference key="7">
    <citation type="journal article" date="2007" name="New Phytol.">
        <title>Arabidopsis thaliana plants acclimated to low dose rates of ultraviolet B radiation show specific changes in morphology and gene expression in the absence of stress symptoms.</title>
        <authorList>
            <person name="Hectors K."/>
            <person name="Prinsen E."/>
            <person name="De Coen W."/>
            <person name="Jansen M.A."/>
            <person name="Guisez Y."/>
        </authorList>
    </citation>
    <scope>INDUCTION</scope>
</reference>
<reference key="8">
    <citation type="journal article" date="2007" name="Plant Cell">
        <title>A downstream mediator in the growth repression limb of the jasmonate pathway.</title>
        <authorList>
            <person name="Yan Y."/>
            <person name="Stolz S."/>
            <person name="Chetelat A."/>
            <person name="Reymond P."/>
            <person name="Pagni M."/>
            <person name="Dubugnon L."/>
            <person name="Farmer E.E."/>
        </authorList>
    </citation>
    <scope>INDUCTION BY WOUNDING</scope>
</reference>
<reference key="9">
    <citation type="journal article" date="2017" name="Mol. Plant">
        <title>Jasmonic acid oxidase 2 hydroxylates jasmonic acid and represses basal defense and resistance responses against Botrytis cinerea infection.</title>
        <authorList>
            <person name="Smirnova E."/>
            <person name="Marquis V."/>
            <person name="Poirier L."/>
            <person name="Aubert Y."/>
            <person name="Zumsteg J."/>
            <person name="Menard R."/>
            <person name="Miesch L."/>
            <person name="Heitz T."/>
        </authorList>
    </citation>
    <scope>FUNCTION</scope>
    <scope>CATALYTIC ACTIVITY</scope>
    <scope>COFACTOR</scope>
    <scope>INDUCTION</scope>
</reference>
<reference key="10">
    <citation type="journal article" date="2017" name="Proc. Natl. Acad. Sci. U.S.A.">
        <title>Arabidopsis JASMONATE-INDUCED OXYGENASES down-regulate plant immunity by hydroxylation and inactivation of the hormone jasmonic acid.</title>
        <authorList>
            <person name="Caarls L."/>
            <person name="Elberse J."/>
            <person name="Awwanah M."/>
            <person name="Ludwig N.R."/>
            <person name="de Vries M."/>
            <person name="Zeilmaker T."/>
            <person name="Van Wees S.C.M."/>
            <person name="Schuurink R.C."/>
            <person name="Van den Ackerveken G."/>
        </authorList>
    </citation>
    <scope>FUNCTION</scope>
    <scope>CATALYTIC ACTIVITY</scope>
    <scope>COFACTOR</scope>
    <scope>INDUCTION</scope>
    <scope>DISRUPTION PHENOTYPE</scope>
</reference>
<protein>
    <recommendedName>
        <fullName evidence="9">Jasmonate-induced oxygenase 4</fullName>
        <ecNumber evidence="7 8">1.14.11.-</ecNumber>
    </recommendedName>
    <alternativeName>
        <fullName evidence="11">2-oxoglutarate-dependent dioxygenase JOX4</fullName>
    </alternativeName>
    <alternativeName>
        <fullName evidence="11">Anthocyanidin synthase</fullName>
    </alternativeName>
    <alternativeName>
        <fullName evidence="10">Jasmonic acid oxidase 4</fullName>
    </alternativeName>
</protein>
<accession>O80449</accession>
<accession>Q8LCL0</accession>
<organism>
    <name type="scientific">Arabidopsis thaliana</name>
    <name type="common">Mouse-ear cress</name>
    <dbReference type="NCBI Taxonomy" id="3702"/>
    <lineage>
        <taxon>Eukaryota</taxon>
        <taxon>Viridiplantae</taxon>
        <taxon>Streptophyta</taxon>
        <taxon>Embryophyta</taxon>
        <taxon>Tracheophyta</taxon>
        <taxon>Spermatophyta</taxon>
        <taxon>Magnoliopsida</taxon>
        <taxon>eudicotyledons</taxon>
        <taxon>Gunneridae</taxon>
        <taxon>Pentapetalae</taxon>
        <taxon>rosids</taxon>
        <taxon>malvids</taxon>
        <taxon>Brassicales</taxon>
        <taxon>Brassicaceae</taxon>
        <taxon>Camelineae</taxon>
        <taxon>Arabidopsis</taxon>
    </lineage>
</organism>
<gene>
    <name evidence="9" type="primary">JOX4</name>
    <name evidence="11" type="synonym">ANS</name>
    <name evidence="10" type="synonym">JAO4</name>
    <name evidence="12" type="ordered locus">At2g38240</name>
    <name evidence="13" type="ORF">F16M14.17</name>
</gene>
<sequence>MATCWPEPIVSVQSLSQTGVPTVPNRYVKPAHQRPVFNTTQSDAGIEIPVLDMNDVWGKPEGLRLVRSACEEWGFFQMVNHGVTHSLMERVRGAWREFFELPLEEKRKYANSPDTYEGYGSRLGVVKDAKLDWSDYFFLNYLPSSIRNPSKWPSQPPKIRELIEKYGEEVRKLCERLTETLSESLGLKPNKLMQALGGGDKVGASLRTNFYPKCPQPQLTLGLSSHSDPGGITILLPDEKVAGLQVRRGDGWVTIKSVPNALIVNIGDQLQILSNGIYKSVEHQVIVNSGMERVSLAFFYNPRSDIPVGPIEELVTANRPALYKPIRFDEYRSLIRQKGPCGKNQVDSLLLTR</sequence>